<keyword id="KW-0281">Fimbrium</keyword>
<keyword id="KW-0614">Plasmid</keyword>
<keyword id="KW-0732">Signal</keyword>
<organism>
    <name type="scientific">Escherichia coli</name>
    <dbReference type="NCBI Taxonomy" id="562"/>
    <lineage>
        <taxon>Bacteria</taxon>
        <taxon>Pseudomonadati</taxon>
        <taxon>Pseudomonadota</taxon>
        <taxon>Gammaproteobacteria</taxon>
        <taxon>Enterobacterales</taxon>
        <taxon>Enterobacteriaceae</taxon>
        <taxon>Escherichia</taxon>
    </lineage>
</organism>
<accession>P33784</accession>
<protein>
    <recommendedName>
        <fullName>K88 minor fimbrial subunit FaeJ</fullName>
    </recommendedName>
</protein>
<dbReference type="EMBL" id="Z11700">
    <property type="protein sequence ID" value="CAA77762.1"/>
    <property type="molecule type" value="Genomic_DNA"/>
</dbReference>
<dbReference type="EMBL" id="Z11710">
    <property type="protein sequence ID" value="CAA77773.1"/>
    <property type="molecule type" value="Genomic_DNA"/>
</dbReference>
<dbReference type="PIR" id="S24812">
    <property type="entry name" value="S24812"/>
</dbReference>
<dbReference type="RefSeq" id="WP_000932014.1">
    <property type="nucleotide sequence ID" value="NZ_VTOQ01000027.1"/>
</dbReference>
<dbReference type="GO" id="GO:0009289">
    <property type="term" value="C:pilus"/>
    <property type="evidence" value="ECO:0007669"/>
    <property type="project" value="UniProtKB-SubCell"/>
</dbReference>
<comment type="function">
    <text>K88 minor fimbrial subunit, plays an essential role in the biogenesis of the K88 fimbriae. Fimbriae (also called pili), are polar filaments radiating from the surface of the bacterium to a length of 0.5-1.5 micrometers and numbering 100-300 per cell. They enable bacteria to colonize the epithelium of specific host organs.</text>
</comment>
<comment type="subcellular location">
    <subcellularLocation>
        <location>Fimbrium</location>
    </subcellularLocation>
    <text>Located in or along the K88 fimbrial structure.</text>
</comment>
<proteinExistence type="inferred from homology"/>
<name>FAEJ_ECOLX</name>
<reference key="1">
    <citation type="journal article" date="1992" name="J. Bacteriol.">
        <title>Identification of minor fimbrial subunits involved in biosynthesis of K88 fimbriae.</title>
        <authorList>
            <person name="Bakker D."/>
            <person name="Willemsen P.T.J."/>
            <person name="Willems R.H."/>
            <person name="Huisman T.T."/>
            <person name="Mooi F.R."/>
            <person name="Oudega B."/>
            <person name="Stegehuis F."/>
            <person name="de Graaf F.K."/>
        </authorList>
    </citation>
    <scope>NUCLEOTIDE SEQUENCE [GENOMIC DNA]</scope>
</reference>
<gene>
    <name type="primary">faeJ</name>
</gene>
<geneLocation type="plasmid">
    <name>pFM205</name>
</geneLocation>
<sequence>MLNIIHRLKSGMFPALFFLTSASVLAHPLTIPPGHWLEGMAVGVTELSGTLYVRDVSWQWQPRAVRMSSPDAVQAGLAAGKGGMVSESRRGQDFYILGGHTTSLTTARSGLQPSVTLLQVAPSSPRIAARGELARGQVRYGEITFTLRHLLAWQDNITGGQGWSVVSGEVTPEAEKQVKRQLWQVNGYEWTPDYAGLTARPDAFISGAESLLSQENGSQHIAGAWVTSLSDVRVNFPGAEEPVKRWQGNLTPVVVYF</sequence>
<evidence type="ECO:0000255" key="1"/>
<feature type="signal peptide" evidence="1">
    <location>
        <begin position="1"/>
        <end position="26"/>
    </location>
</feature>
<feature type="chain" id="PRO_0000009245" description="K88 minor fimbrial subunit FaeJ">
    <location>
        <begin position="27"/>
        <end position="257"/>
    </location>
</feature>